<dbReference type="EMBL" id="AY666123">
    <property type="protein sequence ID" value="AAU44775.1"/>
    <property type="molecule type" value="mRNA"/>
</dbReference>
<dbReference type="EMBL" id="CP002685">
    <property type="status" value="NOT_ANNOTATED_CDS"/>
    <property type="molecule type" value="Genomic_DNA"/>
</dbReference>
<dbReference type="SMR" id="Q5Y750"/>
<dbReference type="STRING" id="3702.Q5Y750"/>
<dbReference type="Araport" id="AT2G17330"/>
<dbReference type="TAIR" id="AT2G17330"/>
<dbReference type="InParanoid" id="Q5Y750"/>
<dbReference type="Proteomes" id="UP000006548">
    <property type="component" value="Chromosome 2"/>
</dbReference>
<dbReference type="ExpressionAtlas" id="Q5Y750">
    <property type="expression patterns" value="baseline and differential"/>
</dbReference>
<dbReference type="GO" id="GO:0016020">
    <property type="term" value="C:membrane"/>
    <property type="evidence" value="ECO:0007669"/>
    <property type="project" value="UniProtKB-SubCell"/>
</dbReference>
<dbReference type="GO" id="GO:0020037">
    <property type="term" value="F:heme binding"/>
    <property type="evidence" value="ECO:0007669"/>
    <property type="project" value="InterPro"/>
</dbReference>
<dbReference type="GO" id="GO:0005506">
    <property type="term" value="F:iron ion binding"/>
    <property type="evidence" value="ECO:0007669"/>
    <property type="project" value="InterPro"/>
</dbReference>
<dbReference type="GO" id="GO:0008168">
    <property type="term" value="F:methyltransferase activity"/>
    <property type="evidence" value="ECO:0007669"/>
    <property type="project" value="UniProtKB-KW"/>
</dbReference>
<dbReference type="GO" id="GO:0004497">
    <property type="term" value="F:monooxygenase activity"/>
    <property type="evidence" value="ECO:0007669"/>
    <property type="project" value="InterPro"/>
</dbReference>
<dbReference type="GO" id="GO:0016705">
    <property type="term" value="F:oxidoreductase activity, acting on paired donors, with incorporation or reduction of molecular oxygen"/>
    <property type="evidence" value="ECO:0007669"/>
    <property type="project" value="InterPro"/>
</dbReference>
<dbReference type="GO" id="GO:0032259">
    <property type="term" value="P:methylation"/>
    <property type="evidence" value="ECO:0007669"/>
    <property type="project" value="UniProtKB-KW"/>
</dbReference>
<dbReference type="Gene3D" id="1.10.630.10">
    <property type="entry name" value="Cytochrome P450"/>
    <property type="match status" value="1"/>
</dbReference>
<dbReference type="InterPro" id="IPR050529">
    <property type="entry name" value="CYP450_sterol_14alpha_dmase"/>
</dbReference>
<dbReference type="InterPro" id="IPR002403">
    <property type="entry name" value="Cyt_P450_E_grp-IV"/>
</dbReference>
<dbReference type="InterPro" id="IPR036396">
    <property type="entry name" value="Cyt_P450_sf"/>
</dbReference>
<dbReference type="PANTHER" id="PTHR24304:SF2">
    <property type="entry name" value="24-HYDROXYCHOLESTEROL 7-ALPHA-HYDROXYLASE"/>
    <property type="match status" value="1"/>
</dbReference>
<dbReference type="PANTHER" id="PTHR24304">
    <property type="entry name" value="CYTOCHROME P450 FAMILY 7"/>
    <property type="match status" value="1"/>
</dbReference>
<dbReference type="PRINTS" id="PR00465">
    <property type="entry name" value="EP450IV"/>
</dbReference>
<dbReference type="SUPFAM" id="SSF48264">
    <property type="entry name" value="Cytochrome P450"/>
    <property type="match status" value="1"/>
</dbReference>
<protein>
    <recommendedName>
        <fullName>Putative sterol 14-demethylase-like protein</fullName>
    </recommendedName>
    <alternativeName>
        <fullName>Cytochrome P450 51A1</fullName>
    </alternativeName>
    <alternativeName>
        <fullName>Cytochrome P450 51G2</fullName>
    </alternativeName>
</protein>
<feature type="chain" id="PRO_0000413011" description="Putative sterol 14-demethylase-like protein">
    <location>
        <begin position="1"/>
        <end position="145"/>
    </location>
</feature>
<feature type="transmembrane region" description="Helical" evidence="1">
    <location>
        <begin position="5"/>
        <end position="25"/>
    </location>
</feature>
<comment type="subcellular location">
    <subcellularLocation>
        <location evidence="4">Membrane</location>
        <topology evidence="4">Single-pass membrane protein</topology>
    </subcellularLocation>
</comment>
<comment type="tissue specificity">
    <text evidence="2">Expressed specifically in roots.</text>
</comment>
<comment type="disruption phenotype">
    <text evidence="2 3">No visible phenotype.</text>
</comment>
<comment type="similarity">
    <text evidence="4">Belongs to the cytochrome P450 family.</text>
</comment>
<comment type="caution">
    <text evidence="4">Could be the product of a pseudogene.</text>
</comment>
<name>CP512_ARATH</name>
<gene>
    <name type="primary">CYP51G2</name>
    <name type="synonym">CYP51A1</name>
    <name type="ordered locus">At2g17330</name>
    <name type="ORF">F5J6.9</name>
</gene>
<reference key="1">
    <citation type="journal article" date="2005" name="Plant Physiol.">
        <title>Arabidopsis cyp51 mutant shows postembryonic seedling lethality associated with lack of membrane integrity.</title>
        <authorList>
            <person name="Kim H.B."/>
            <person name="Schaller H."/>
            <person name="Goh C.H."/>
            <person name="Kwon M."/>
            <person name="Choe S."/>
            <person name="An C.S."/>
            <person name="Durst F."/>
            <person name="Feldmann K.A."/>
            <person name="Feyereisen R."/>
        </authorList>
    </citation>
    <scope>NUCLEOTIDE SEQUENCE [MRNA]</scope>
    <scope>DISRUPTION PHENOTYPE</scope>
    <scope>TISSUE SPECIFICITY</scope>
</reference>
<reference key="2">
    <citation type="journal article" date="2017" name="Plant J.">
        <title>Araport11: a complete reannotation of the Arabidopsis thaliana reference genome.</title>
        <authorList>
            <person name="Cheng C.Y."/>
            <person name="Krishnakumar V."/>
            <person name="Chan A.P."/>
            <person name="Thibaud-Nissen F."/>
            <person name="Schobel S."/>
            <person name="Town C.D."/>
        </authorList>
    </citation>
    <scope>GENOME REANNOTATION</scope>
    <source>
        <strain>cv. Columbia</strain>
    </source>
</reference>
<reference key="3">
    <citation type="journal article" date="2005" name="Plant Physiol.">
        <title>Lipid signaling in plants. Cloning and expression analysis of the obtusifoliol 14alpha-demethylase from Solanum chacoense Bitt., a pollination- and fertilization-induced gene with both obtusifoliol and lanosterol demethylase activity.</title>
        <authorList>
            <person name="O'Brien M."/>
            <person name="Chantha S.C."/>
            <person name="Rahier A."/>
            <person name="Matton D.P."/>
        </authorList>
    </citation>
    <scope>DISRUPTION PHENOTYPE</scope>
</reference>
<keyword id="KW-0349">Heme</keyword>
<keyword id="KW-0408">Iron</keyword>
<keyword id="KW-0472">Membrane</keyword>
<keyword id="KW-0479">Metal-binding</keyword>
<keyword id="KW-0489">Methyltransferase</keyword>
<keyword id="KW-1185">Reference proteome</keyword>
<keyword id="KW-0808">Transferase</keyword>
<keyword id="KW-0812">Transmembrane</keyword>
<keyword id="KW-1133">Transmembrane helix</keyword>
<sequence length="145" mass="16568">MDWDYYTLLKTSVAIIIVFVVAKLITSSKSKKKTSVVPLPPVLQAWPPFIGSLIRFMKGPIVLLREEYPKLGSVFTVKLLHKNITFLIGPEVSSHFFNAYESELSQKEIYKFNVPTFGPGVVFDVDYPVRMEQFRFFSSALKVNN</sequence>
<proteinExistence type="uncertain"/>
<accession>Q5Y750</accession>
<organism>
    <name type="scientific">Arabidopsis thaliana</name>
    <name type="common">Mouse-ear cress</name>
    <dbReference type="NCBI Taxonomy" id="3702"/>
    <lineage>
        <taxon>Eukaryota</taxon>
        <taxon>Viridiplantae</taxon>
        <taxon>Streptophyta</taxon>
        <taxon>Embryophyta</taxon>
        <taxon>Tracheophyta</taxon>
        <taxon>Spermatophyta</taxon>
        <taxon>Magnoliopsida</taxon>
        <taxon>eudicotyledons</taxon>
        <taxon>Gunneridae</taxon>
        <taxon>Pentapetalae</taxon>
        <taxon>rosids</taxon>
        <taxon>malvids</taxon>
        <taxon>Brassicales</taxon>
        <taxon>Brassicaceae</taxon>
        <taxon>Camelineae</taxon>
        <taxon>Arabidopsis</taxon>
    </lineage>
</organism>
<evidence type="ECO:0000255" key="1"/>
<evidence type="ECO:0000269" key="2">
    <source>
    </source>
</evidence>
<evidence type="ECO:0000269" key="3">
    <source>
    </source>
</evidence>
<evidence type="ECO:0000305" key="4"/>